<gene>
    <name type="primary">TAE1</name>
    <name type="synonym">NTM1</name>
    <name type="ordered locus">YBR261C</name>
    <name type="ORF">YBR1729</name>
</gene>
<dbReference type="EC" id="2.1.1.244"/>
<dbReference type="EMBL" id="X70529">
    <property type="protein sequence ID" value="CAA49926.1"/>
    <property type="molecule type" value="Genomic_DNA"/>
</dbReference>
<dbReference type="EMBL" id="Z36130">
    <property type="protein sequence ID" value="CAA85224.1"/>
    <property type="molecule type" value="Genomic_DNA"/>
</dbReference>
<dbReference type="EMBL" id="BK006936">
    <property type="protein sequence ID" value="DAA07378.1"/>
    <property type="molecule type" value="Genomic_DNA"/>
</dbReference>
<dbReference type="PIR" id="S32963">
    <property type="entry name" value="S32963"/>
</dbReference>
<dbReference type="RefSeq" id="NP_009820.1">
    <property type="nucleotide sequence ID" value="NM_001178609.1"/>
</dbReference>
<dbReference type="PDB" id="7D8D">
    <property type="method" value="X-ray"/>
    <property type="resolution" value="1.05 A"/>
    <property type="chains" value="A=1-232"/>
</dbReference>
<dbReference type="PDB" id="7D8F">
    <property type="method" value="X-ray"/>
    <property type="resolution" value="1.15 A"/>
    <property type="chains" value="A=1-232"/>
</dbReference>
<dbReference type="PDBsum" id="7D8D"/>
<dbReference type="PDBsum" id="7D8F"/>
<dbReference type="SMR" id="P38340"/>
<dbReference type="BioGRID" id="32957">
    <property type="interactions" value="223"/>
</dbReference>
<dbReference type="DIP" id="DIP-4951N"/>
<dbReference type="FunCoup" id="P38340">
    <property type="interactions" value="532"/>
</dbReference>
<dbReference type="IntAct" id="P38340">
    <property type="interactions" value="44"/>
</dbReference>
<dbReference type="STRING" id="4932.YBR261C"/>
<dbReference type="iPTMnet" id="P38340"/>
<dbReference type="PaxDb" id="4932-YBR261C"/>
<dbReference type="PeptideAtlas" id="P38340"/>
<dbReference type="EnsemblFungi" id="YBR261C_mRNA">
    <property type="protein sequence ID" value="YBR261C"/>
    <property type="gene ID" value="YBR261C"/>
</dbReference>
<dbReference type="GeneID" id="852564"/>
<dbReference type="KEGG" id="sce:YBR261C"/>
<dbReference type="AGR" id="SGD:S000000465"/>
<dbReference type="SGD" id="S000000465">
    <property type="gene designation" value="TAE1"/>
</dbReference>
<dbReference type="VEuPathDB" id="FungiDB:YBR261C"/>
<dbReference type="eggNOG" id="KOG3178">
    <property type="taxonomic scope" value="Eukaryota"/>
</dbReference>
<dbReference type="GeneTree" id="ENSGT00390000008371"/>
<dbReference type="HOGENOM" id="CLU_055356_3_1_1"/>
<dbReference type="InParanoid" id="P38340"/>
<dbReference type="OMA" id="PVRMYCL"/>
<dbReference type="OrthoDB" id="1298661at2759"/>
<dbReference type="BioCyc" id="YEAST:G3O-29185-MONOMER"/>
<dbReference type="BRENDA" id="2.1.1.244">
    <property type="organism ID" value="984"/>
</dbReference>
<dbReference type="BioGRID-ORCS" id="852564">
    <property type="hits" value="10 hits in 10 CRISPR screens"/>
</dbReference>
<dbReference type="PRO" id="PR:P38340"/>
<dbReference type="Proteomes" id="UP000002311">
    <property type="component" value="Chromosome II"/>
</dbReference>
<dbReference type="RNAct" id="P38340">
    <property type="molecule type" value="protein"/>
</dbReference>
<dbReference type="GO" id="GO:0005737">
    <property type="term" value="C:cytoplasm"/>
    <property type="evidence" value="ECO:0007005"/>
    <property type="project" value="SGD"/>
</dbReference>
<dbReference type="GO" id="GO:0005829">
    <property type="term" value="C:cytosol"/>
    <property type="evidence" value="ECO:0000314"/>
    <property type="project" value="SGD"/>
</dbReference>
<dbReference type="GO" id="GO:0071885">
    <property type="term" value="F:N-terminal protein N-methyltransferase activity"/>
    <property type="evidence" value="ECO:0000314"/>
    <property type="project" value="SGD"/>
</dbReference>
<dbReference type="GO" id="GO:0002181">
    <property type="term" value="P:cytoplasmic translation"/>
    <property type="evidence" value="ECO:0000315"/>
    <property type="project" value="SGD"/>
</dbReference>
<dbReference type="GO" id="GO:0032259">
    <property type="term" value="P:methylation"/>
    <property type="evidence" value="ECO:0007669"/>
    <property type="project" value="UniProtKB-KW"/>
</dbReference>
<dbReference type="CDD" id="cd02440">
    <property type="entry name" value="AdoMet_MTases"/>
    <property type="match status" value="1"/>
</dbReference>
<dbReference type="FunFam" id="3.40.50.150:FF:000025">
    <property type="entry name" value="N-terminal Xaa-Pro-Lys N-methyltransferase 1"/>
    <property type="match status" value="1"/>
</dbReference>
<dbReference type="Gene3D" id="3.40.50.150">
    <property type="entry name" value="Vaccinia Virus protein VP39"/>
    <property type="match status" value="1"/>
</dbReference>
<dbReference type="InterPro" id="IPR008576">
    <property type="entry name" value="MeTrfase_NTM1"/>
</dbReference>
<dbReference type="InterPro" id="IPR029063">
    <property type="entry name" value="SAM-dependent_MTases_sf"/>
</dbReference>
<dbReference type="PANTHER" id="PTHR12753">
    <property type="entry name" value="AD-003 - RELATED"/>
    <property type="match status" value="1"/>
</dbReference>
<dbReference type="PANTHER" id="PTHR12753:SF0">
    <property type="entry name" value="ALPHA N-TERMINAL PROTEIN METHYLTRANSFERASE 1"/>
    <property type="match status" value="1"/>
</dbReference>
<dbReference type="Pfam" id="PF05891">
    <property type="entry name" value="Methyltransf_PK"/>
    <property type="match status" value="1"/>
</dbReference>
<dbReference type="PIRSF" id="PIRSF016958">
    <property type="entry name" value="DUF858_MeTrfase_lik"/>
    <property type="match status" value="1"/>
</dbReference>
<dbReference type="SUPFAM" id="SSF53335">
    <property type="entry name" value="S-adenosyl-L-methionine-dependent methyltransferases"/>
    <property type="match status" value="1"/>
</dbReference>
<protein>
    <recommendedName>
        <fullName>Alpha N-terminal protein methyltransferase 1</fullName>
        <ecNumber>2.1.1.244</ecNumber>
    </recommendedName>
    <alternativeName>
        <fullName>Translation associated element 1</fullName>
    </alternativeName>
    <alternativeName>
        <fullName>X-Pro-Lys N-terminal protein methyltransferase 1</fullName>
        <shortName>NTM1</shortName>
    </alternativeName>
</protein>
<accession>P38340</accession>
<accession>D6VQQ8</accession>
<reference key="1">
    <citation type="journal article" date="1993" name="Yeast">
        <title>The complete sequence of a 19,482 bp segment located on the right arm of chromosome II from Saccharomyces cerevisiae.</title>
        <authorList>
            <person name="Doignon F."/>
            <person name="Biteau N."/>
            <person name="Crouzet M."/>
            <person name="Aigle M."/>
        </authorList>
    </citation>
    <scope>NUCLEOTIDE SEQUENCE [GENOMIC DNA]</scope>
    <source>
        <strain>ATCC 204508 / S288c</strain>
    </source>
</reference>
<reference key="2">
    <citation type="journal article" date="1994" name="EMBO J.">
        <title>Complete DNA sequence of yeast chromosome II.</title>
        <authorList>
            <person name="Feldmann H."/>
            <person name="Aigle M."/>
            <person name="Aljinovic G."/>
            <person name="Andre B."/>
            <person name="Baclet M.C."/>
            <person name="Barthe C."/>
            <person name="Baur A."/>
            <person name="Becam A.-M."/>
            <person name="Biteau N."/>
            <person name="Boles E."/>
            <person name="Brandt T."/>
            <person name="Brendel M."/>
            <person name="Brueckner M."/>
            <person name="Bussereau F."/>
            <person name="Christiansen C."/>
            <person name="Contreras R."/>
            <person name="Crouzet M."/>
            <person name="Cziepluch C."/>
            <person name="Demolis N."/>
            <person name="Delaveau T."/>
            <person name="Doignon F."/>
            <person name="Domdey H."/>
            <person name="Duesterhus S."/>
            <person name="Dubois E."/>
            <person name="Dujon B."/>
            <person name="El Bakkoury M."/>
            <person name="Entian K.-D."/>
            <person name="Feuermann M."/>
            <person name="Fiers W."/>
            <person name="Fobo G.M."/>
            <person name="Fritz C."/>
            <person name="Gassenhuber J."/>
            <person name="Glansdorff N."/>
            <person name="Goffeau A."/>
            <person name="Grivell L.A."/>
            <person name="de Haan M."/>
            <person name="Hein C."/>
            <person name="Herbert C.J."/>
            <person name="Hollenberg C.P."/>
            <person name="Holmstroem K."/>
            <person name="Jacq C."/>
            <person name="Jacquet M."/>
            <person name="Jauniaux J.-C."/>
            <person name="Jonniaux J.-L."/>
            <person name="Kallesoee T."/>
            <person name="Kiesau P."/>
            <person name="Kirchrath L."/>
            <person name="Koetter P."/>
            <person name="Korol S."/>
            <person name="Liebl S."/>
            <person name="Logghe M."/>
            <person name="Lohan A.J.E."/>
            <person name="Louis E.J."/>
            <person name="Li Z.Y."/>
            <person name="Maat M.J."/>
            <person name="Mallet L."/>
            <person name="Mannhaupt G."/>
            <person name="Messenguy F."/>
            <person name="Miosga T."/>
            <person name="Molemans F."/>
            <person name="Mueller S."/>
            <person name="Nasr F."/>
            <person name="Obermaier B."/>
            <person name="Perea J."/>
            <person name="Pierard A."/>
            <person name="Piravandi E."/>
            <person name="Pohl F.M."/>
            <person name="Pohl T.M."/>
            <person name="Potier S."/>
            <person name="Proft M."/>
            <person name="Purnelle B."/>
            <person name="Ramezani Rad M."/>
            <person name="Rieger M."/>
            <person name="Rose M."/>
            <person name="Schaaff-Gerstenschlaeger I."/>
            <person name="Scherens B."/>
            <person name="Schwarzlose C."/>
            <person name="Skala J."/>
            <person name="Slonimski P.P."/>
            <person name="Smits P.H.M."/>
            <person name="Souciet J.-L."/>
            <person name="Steensma H.Y."/>
            <person name="Stucka R."/>
            <person name="Urrestarazu L.A."/>
            <person name="van der Aart Q.J.M."/>
            <person name="Van Dyck L."/>
            <person name="Vassarotti A."/>
            <person name="Vetter I."/>
            <person name="Vierendeels F."/>
            <person name="Vissers S."/>
            <person name="Wagner G."/>
            <person name="de Wergifosse P."/>
            <person name="Wolfe K.H."/>
            <person name="Zagulski M."/>
            <person name="Zimmermann F.K."/>
            <person name="Mewes H.-W."/>
            <person name="Kleine K."/>
        </authorList>
    </citation>
    <scope>NUCLEOTIDE SEQUENCE [LARGE SCALE GENOMIC DNA]</scope>
    <source>
        <strain>ATCC 204508 / S288c</strain>
    </source>
</reference>
<reference key="3">
    <citation type="journal article" date="2014" name="G3 (Bethesda)">
        <title>The reference genome sequence of Saccharomyces cerevisiae: Then and now.</title>
        <authorList>
            <person name="Engel S.R."/>
            <person name="Dietrich F.S."/>
            <person name="Fisk D.G."/>
            <person name="Binkley G."/>
            <person name="Balakrishnan R."/>
            <person name="Costanzo M.C."/>
            <person name="Dwight S.S."/>
            <person name="Hitz B.C."/>
            <person name="Karra K."/>
            <person name="Nash R.S."/>
            <person name="Weng S."/>
            <person name="Wong E.D."/>
            <person name="Lloyd P."/>
            <person name="Skrzypek M.S."/>
            <person name="Miyasato S.R."/>
            <person name="Simison M."/>
            <person name="Cherry J.M."/>
        </authorList>
    </citation>
    <scope>GENOME REANNOTATION</scope>
    <source>
        <strain>ATCC 204508 / S288c</strain>
    </source>
</reference>
<reference key="4">
    <citation type="journal article" date="2003" name="Nature">
        <title>Global analysis of protein localization in budding yeast.</title>
        <authorList>
            <person name="Huh W.-K."/>
            <person name="Falvo J.V."/>
            <person name="Gerke L.C."/>
            <person name="Carroll A.S."/>
            <person name="Howson R.W."/>
            <person name="Weissman J.S."/>
            <person name="O'Shea E.K."/>
        </authorList>
    </citation>
    <scope>SUBCELLULAR LOCATION [LARGE SCALE ANALYSIS]</scope>
</reference>
<reference key="5">
    <citation type="journal article" date="2003" name="Nature">
        <title>Global analysis of protein expression in yeast.</title>
        <authorList>
            <person name="Ghaemmaghami S."/>
            <person name="Huh W.-K."/>
            <person name="Bower K."/>
            <person name="Howson R.W."/>
            <person name="Belle A."/>
            <person name="Dephoure N."/>
            <person name="O'Shea E.K."/>
            <person name="Weissman J.S."/>
        </authorList>
    </citation>
    <scope>LEVEL OF PROTEIN EXPRESSION [LARGE SCALE ANALYSIS]</scope>
</reference>
<reference key="6">
    <citation type="journal article" date="2008" name="BMC Genomics">
        <title>Chemical-genetic profile analysis in yeast suggests that a previously uncharacterized open reading frame, YBR261C, affects protein synthesis.</title>
        <authorList>
            <person name="Alamgir M."/>
            <person name="Eroukova V."/>
            <person name="Jessulat M."/>
            <person name="Xu J."/>
            <person name="Golshani A."/>
        </authorList>
    </citation>
    <scope>DISRUPTION PHENOTYPE</scope>
</reference>
<reference key="7">
    <citation type="journal article" date="2010" name="Biochemistry">
        <title>Identification of protein N-terminal methyltransferases in yeast and humans.</title>
        <authorList>
            <person name="Webb K.J."/>
            <person name="Lipson R.S."/>
            <person name="Al-Hadid Q."/>
            <person name="Whitelegge J.P."/>
            <person name="Clarke S.G."/>
        </authorList>
    </citation>
    <scope>FUNCTION</scope>
</reference>
<evidence type="ECO:0000250" key="1"/>
<evidence type="ECO:0000269" key="2">
    <source>
    </source>
</evidence>
<evidence type="ECO:0000269" key="3">
    <source>
    </source>
</evidence>
<evidence type="ECO:0000269" key="4">
    <source>
    </source>
</evidence>
<evidence type="ECO:0000269" key="5">
    <source>
    </source>
</evidence>
<evidence type="ECO:0000305" key="6"/>
<evidence type="ECO:0007829" key="7">
    <source>
        <dbReference type="PDB" id="7D8D"/>
    </source>
</evidence>
<evidence type="ECO:0007829" key="8">
    <source>
        <dbReference type="PDB" id="7D8F"/>
    </source>
</evidence>
<comment type="function">
    <text evidence="5">Alpha-N-methyltransferase that methylates the N-terminus of target proteins containing the N-terminal motif [Ala/Pro/Ser]-Pro-Lys when the initiator Met is cleaved. Specifically catalyzes mono-, di- or tri-methylation of exposed alpha-amino group of Ala or Ser residue in the [Ala/Ser]-Pro-Lys motif and mono- or di-methylation of Pro in the Pro-Pro-Lys motif. Responsible for the N-terminal methylation of the ribosomal proteins RPL12A, RPL12B, RPS25A and RPS25B.</text>
</comment>
<comment type="catalytic activity">
    <reaction>
        <text>N-terminal L-alanyl-L-prolyl-L-lysyl-[protein] + 3 S-adenosyl-L-methionine = N-terminal N,N,N-trimethyl-L-alanyl-L-prolyl-L-lysyl-[protein] + 3 S-adenosyl-L-homocysteine + 3 H(+)</text>
        <dbReference type="Rhea" id="RHEA:54712"/>
        <dbReference type="Rhea" id="RHEA-COMP:13785"/>
        <dbReference type="Rhea" id="RHEA-COMP:13971"/>
        <dbReference type="ChEBI" id="CHEBI:15378"/>
        <dbReference type="ChEBI" id="CHEBI:57856"/>
        <dbReference type="ChEBI" id="CHEBI:59789"/>
        <dbReference type="ChEBI" id="CHEBI:138057"/>
        <dbReference type="ChEBI" id="CHEBI:138315"/>
        <dbReference type="EC" id="2.1.1.244"/>
    </reaction>
</comment>
<comment type="catalytic activity">
    <reaction>
        <text>N-terminal L-seryl-L-prolyl-L-lysyl-[protein] + 3 S-adenosyl-L-methionine = N-terminal N,N,N-trimethyl-L-seryl-L-prolyl-L-lysyl-[protein] + 3 S-adenosyl-L-homocysteine + 3 H(+)</text>
        <dbReference type="Rhea" id="RHEA:54724"/>
        <dbReference type="Rhea" id="RHEA-COMP:13789"/>
        <dbReference type="Rhea" id="RHEA-COMP:13973"/>
        <dbReference type="ChEBI" id="CHEBI:15378"/>
        <dbReference type="ChEBI" id="CHEBI:57856"/>
        <dbReference type="ChEBI" id="CHEBI:59789"/>
        <dbReference type="ChEBI" id="CHEBI:138061"/>
        <dbReference type="ChEBI" id="CHEBI:138317"/>
        <dbReference type="EC" id="2.1.1.244"/>
    </reaction>
</comment>
<comment type="catalytic activity">
    <reaction>
        <text>N-terminal L-prolyl-L-prolyl-L-lysyl-[protein] + 2 S-adenosyl-L-methionine = N-terminal N,N-dimethyl-L-prolyl-L-prolyl-L-lysyl-[protein] + 2 S-adenosyl-L-homocysteine + 2 H(+)</text>
        <dbReference type="Rhea" id="RHEA:54736"/>
        <dbReference type="Rhea" id="RHEA-COMP:13787"/>
        <dbReference type="Rhea" id="RHEA-COMP:13974"/>
        <dbReference type="ChEBI" id="CHEBI:15378"/>
        <dbReference type="ChEBI" id="CHEBI:57856"/>
        <dbReference type="ChEBI" id="CHEBI:59789"/>
        <dbReference type="ChEBI" id="CHEBI:138059"/>
        <dbReference type="ChEBI" id="CHEBI:138318"/>
        <dbReference type="EC" id="2.1.1.244"/>
    </reaction>
</comment>
<comment type="subcellular location">
    <subcellularLocation>
        <location evidence="2">Cytoplasm</location>
    </subcellularLocation>
</comment>
<comment type="disruption phenotype">
    <text evidence="4">Defects in both translation efficiency and fidelity.</text>
</comment>
<comment type="miscellaneous">
    <text evidence="3">Present with 3060 molecules/cell in log phase SD medium.</text>
</comment>
<comment type="similarity">
    <text evidence="6">Belongs to the methyltransferase superfamily. NTM1 family.</text>
</comment>
<proteinExistence type="evidence at protein level"/>
<keyword id="KW-0002">3D-structure</keyword>
<keyword id="KW-0963">Cytoplasm</keyword>
<keyword id="KW-0489">Methyltransferase</keyword>
<keyword id="KW-1185">Reference proteome</keyword>
<keyword id="KW-0949">S-adenosyl-L-methionine</keyword>
<keyword id="KW-0808">Transferase</keyword>
<sequence>MDVPADSHIKYEDAIDYWTDVDATVDGVLGGYGEGTVVPTMDVLGSNNFLRKLKSRMLPQENNVKYAVDIGAGIGRVSKTMLHKHAAKIDLVEPVKPFIEQMHVELAELKDKGQIGQIYEVGMQDWTPDAGKYWLIWCQWCVGHLPDAELVAFLKRCIVGLQPNGTIVVKENNTPTDTDDFDETDSSVTRSDAKFRQIFEEAGLKLIASERQRGLPRELYPVRMYALKPMPN</sequence>
<name>NTM1_YEAST</name>
<feature type="chain" id="PRO_0000119292" description="Alpha N-terminal protein methyltransferase 1">
    <location>
        <begin position="1"/>
        <end position="232"/>
    </location>
</feature>
<feature type="binding site" evidence="1">
    <location>
        <position position="71"/>
    </location>
    <ligand>
        <name>S-adenosyl-L-methionine</name>
        <dbReference type="ChEBI" id="CHEBI:59789"/>
    </ligand>
</feature>
<feature type="binding site" evidence="1">
    <location>
        <position position="76"/>
    </location>
    <ligand>
        <name>S-adenosyl-L-methionine</name>
        <dbReference type="ChEBI" id="CHEBI:59789"/>
    </ligand>
</feature>
<feature type="binding site" evidence="1">
    <location>
        <begin position="123"/>
        <end position="124"/>
    </location>
    <ligand>
        <name>S-adenosyl-L-methionine</name>
        <dbReference type="ChEBI" id="CHEBI:59789"/>
    </ligand>
</feature>
<feature type="binding site" evidence="1">
    <location>
        <position position="139"/>
    </location>
    <ligand>
        <name>S-adenosyl-L-methionine</name>
        <dbReference type="ChEBI" id="CHEBI:59789"/>
    </ligand>
</feature>
<feature type="helix" evidence="7">
    <location>
        <begin position="5"/>
        <end position="8"/>
    </location>
</feature>
<feature type="helix" evidence="7">
    <location>
        <begin position="11"/>
        <end position="19"/>
    </location>
</feature>
<feature type="helix" evidence="7">
    <location>
        <begin position="25"/>
        <end position="28"/>
    </location>
</feature>
<feature type="turn" evidence="7">
    <location>
        <begin position="29"/>
        <end position="31"/>
    </location>
</feature>
<feature type="helix" evidence="7">
    <location>
        <begin position="38"/>
        <end position="52"/>
    </location>
</feature>
<feature type="helix" evidence="7">
    <location>
        <begin position="54"/>
        <end position="56"/>
    </location>
</feature>
<feature type="strand" evidence="7">
    <location>
        <begin position="66"/>
        <end position="70"/>
    </location>
</feature>
<feature type="turn" evidence="8">
    <location>
        <begin position="73"/>
        <end position="75"/>
    </location>
</feature>
<feature type="helix" evidence="7">
    <location>
        <begin position="76"/>
        <end position="80"/>
    </location>
</feature>
<feature type="helix" evidence="7">
    <location>
        <begin position="82"/>
        <end position="85"/>
    </location>
</feature>
<feature type="strand" evidence="7">
    <location>
        <begin position="87"/>
        <end position="92"/>
    </location>
</feature>
<feature type="helix" evidence="7">
    <location>
        <begin position="96"/>
        <end position="105"/>
    </location>
</feature>
<feature type="helix" evidence="7">
    <location>
        <begin position="107"/>
        <end position="111"/>
    </location>
</feature>
<feature type="strand" evidence="7">
    <location>
        <begin position="115"/>
        <end position="119"/>
    </location>
</feature>
<feature type="helix" evidence="7">
    <location>
        <begin position="123"/>
        <end position="125"/>
    </location>
</feature>
<feature type="strand" evidence="7">
    <location>
        <begin position="133"/>
        <end position="140"/>
    </location>
</feature>
<feature type="helix" evidence="7">
    <location>
        <begin position="142"/>
        <end position="144"/>
    </location>
</feature>
<feature type="helix" evidence="7">
    <location>
        <begin position="147"/>
        <end position="159"/>
    </location>
</feature>
<feature type="strand" evidence="7">
    <location>
        <begin position="161"/>
        <end position="172"/>
    </location>
</feature>
<feature type="strand" evidence="7">
    <location>
        <begin position="175"/>
        <end position="178"/>
    </location>
</feature>
<feature type="strand" evidence="7">
    <location>
        <begin position="180"/>
        <end position="182"/>
    </location>
</feature>
<feature type="turn" evidence="7">
    <location>
        <begin position="183"/>
        <end position="186"/>
    </location>
</feature>
<feature type="strand" evidence="7">
    <location>
        <begin position="187"/>
        <end position="189"/>
    </location>
</feature>
<feature type="helix" evidence="7">
    <location>
        <begin position="192"/>
        <end position="201"/>
    </location>
</feature>
<feature type="strand" evidence="7">
    <location>
        <begin position="204"/>
        <end position="211"/>
    </location>
</feature>
<feature type="strand" evidence="7">
    <location>
        <begin position="222"/>
        <end position="229"/>
    </location>
</feature>
<organism>
    <name type="scientific">Saccharomyces cerevisiae (strain ATCC 204508 / S288c)</name>
    <name type="common">Baker's yeast</name>
    <dbReference type="NCBI Taxonomy" id="559292"/>
    <lineage>
        <taxon>Eukaryota</taxon>
        <taxon>Fungi</taxon>
        <taxon>Dikarya</taxon>
        <taxon>Ascomycota</taxon>
        <taxon>Saccharomycotina</taxon>
        <taxon>Saccharomycetes</taxon>
        <taxon>Saccharomycetales</taxon>
        <taxon>Saccharomycetaceae</taxon>
        <taxon>Saccharomyces</taxon>
    </lineage>
</organism>